<proteinExistence type="inferred from homology"/>
<sequence>MLYWLSEILHINILGYITIRAGIAFFLALFFTLFLMPRFIRWAQSTSSHQPINEWAPQRHQGKAKTPTMGGIVFIFATILASLISIKFSNLYAVGAVLTLIFFSIIGFKDDIAKIKKNENLAGLKAKTKLILQTTFALIISIFLYTLSDFNTSLYVPFLKNPLFDMGIFAIFFWVIVIIATSNAVNLTDGLDGLATVPSITALASFSIIIYITGNVTMSSYLLMPNINIGEVAIVSSALIGALSGFLWYNCHPAEVFMGDSGSLTIGAFLGYLAIISKSEILLLLIGSIFVIETLSVILQVGSYKLRKKRVFLMAPIHHHFEMKNWAENKIIVRFWIIATLSNVIALITLKIR</sequence>
<dbReference type="EC" id="2.7.8.13" evidence="1"/>
<dbReference type="EMBL" id="CP000153">
    <property type="protein sequence ID" value="ABB44892.1"/>
    <property type="molecule type" value="Genomic_DNA"/>
</dbReference>
<dbReference type="RefSeq" id="WP_011373233.1">
    <property type="nucleotide sequence ID" value="NC_007575.1"/>
</dbReference>
<dbReference type="SMR" id="Q30Q39"/>
<dbReference type="STRING" id="326298.Suden_1615"/>
<dbReference type="KEGG" id="tdn:Suden_1615"/>
<dbReference type="eggNOG" id="COG0472">
    <property type="taxonomic scope" value="Bacteria"/>
</dbReference>
<dbReference type="HOGENOM" id="CLU_023982_0_0_7"/>
<dbReference type="OrthoDB" id="9805475at2"/>
<dbReference type="UniPathway" id="UPA00219"/>
<dbReference type="Proteomes" id="UP000002714">
    <property type="component" value="Chromosome"/>
</dbReference>
<dbReference type="GO" id="GO:0005886">
    <property type="term" value="C:plasma membrane"/>
    <property type="evidence" value="ECO:0007669"/>
    <property type="project" value="UniProtKB-SubCell"/>
</dbReference>
<dbReference type="GO" id="GO:0046872">
    <property type="term" value="F:metal ion binding"/>
    <property type="evidence" value="ECO:0007669"/>
    <property type="project" value="UniProtKB-KW"/>
</dbReference>
<dbReference type="GO" id="GO:0008963">
    <property type="term" value="F:phospho-N-acetylmuramoyl-pentapeptide-transferase activity"/>
    <property type="evidence" value="ECO:0007669"/>
    <property type="project" value="UniProtKB-UniRule"/>
</dbReference>
<dbReference type="GO" id="GO:0051992">
    <property type="term" value="F:UDP-N-acetylmuramoyl-L-alanyl-D-glutamyl-meso-2,6-diaminopimelyl-D-alanyl-D-alanine:undecaprenyl-phosphate transferase activity"/>
    <property type="evidence" value="ECO:0007669"/>
    <property type="project" value="RHEA"/>
</dbReference>
<dbReference type="GO" id="GO:0051301">
    <property type="term" value="P:cell division"/>
    <property type="evidence" value="ECO:0007669"/>
    <property type="project" value="UniProtKB-KW"/>
</dbReference>
<dbReference type="GO" id="GO:0071555">
    <property type="term" value="P:cell wall organization"/>
    <property type="evidence" value="ECO:0007669"/>
    <property type="project" value="UniProtKB-KW"/>
</dbReference>
<dbReference type="GO" id="GO:0009252">
    <property type="term" value="P:peptidoglycan biosynthetic process"/>
    <property type="evidence" value="ECO:0007669"/>
    <property type="project" value="UniProtKB-UniRule"/>
</dbReference>
<dbReference type="GO" id="GO:0008360">
    <property type="term" value="P:regulation of cell shape"/>
    <property type="evidence" value="ECO:0007669"/>
    <property type="project" value="UniProtKB-KW"/>
</dbReference>
<dbReference type="CDD" id="cd06852">
    <property type="entry name" value="GT_MraY"/>
    <property type="match status" value="1"/>
</dbReference>
<dbReference type="HAMAP" id="MF_00038">
    <property type="entry name" value="MraY"/>
    <property type="match status" value="1"/>
</dbReference>
<dbReference type="InterPro" id="IPR000715">
    <property type="entry name" value="Glycosyl_transferase_4"/>
</dbReference>
<dbReference type="InterPro" id="IPR003524">
    <property type="entry name" value="PNAcMuramoyl-5peptid_Trfase"/>
</dbReference>
<dbReference type="InterPro" id="IPR018480">
    <property type="entry name" value="PNAcMuramoyl-5peptid_Trfase_CS"/>
</dbReference>
<dbReference type="NCBIfam" id="TIGR00445">
    <property type="entry name" value="mraY"/>
    <property type="match status" value="1"/>
</dbReference>
<dbReference type="PANTHER" id="PTHR22926">
    <property type="entry name" value="PHOSPHO-N-ACETYLMURAMOYL-PENTAPEPTIDE-TRANSFERASE"/>
    <property type="match status" value="1"/>
</dbReference>
<dbReference type="PANTHER" id="PTHR22926:SF5">
    <property type="entry name" value="PHOSPHO-N-ACETYLMURAMOYL-PENTAPEPTIDE-TRANSFERASE HOMOLOG"/>
    <property type="match status" value="1"/>
</dbReference>
<dbReference type="Pfam" id="PF00953">
    <property type="entry name" value="Glycos_transf_4"/>
    <property type="match status" value="1"/>
</dbReference>
<dbReference type="Pfam" id="PF10555">
    <property type="entry name" value="MraY_sig1"/>
    <property type="match status" value="1"/>
</dbReference>
<dbReference type="PROSITE" id="PS01347">
    <property type="entry name" value="MRAY_1"/>
    <property type="match status" value="1"/>
</dbReference>
<dbReference type="PROSITE" id="PS01348">
    <property type="entry name" value="MRAY_2"/>
    <property type="match status" value="1"/>
</dbReference>
<accession>Q30Q39</accession>
<gene>
    <name evidence="1" type="primary">mraY</name>
    <name type="ordered locus">Suden_1615</name>
</gene>
<keyword id="KW-0131">Cell cycle</keyword>
<keyword id="KW-0132">Cell division</keyword>
<keyword id="KW-0997">Cell inner membrane</keyword>
<keyword id="KW-1003">Cell membrane</keyword>
<keyword id="KW-0133">Cell shape</keyword>
<keyword id="KW-0961">Cell wall biogenesis/degradation</keyword>
<keyword id="KW-0460">Magnesium</keyword>
<keyword id="KW-0472">Membrane</keyword>
<keyword id="KW-0479">Metal-binding</keyword>
<keyword id="KW-0573">Peptidoglycan synthesis</keyword>
<keyword id="KW-1185">Reference proteome</keyword>
<keyword id="KW-0808">Transferase</keyword>
<keyword id="KW-0812">Transmembrane</keyword>
<keyword id="KW-1133">Transmembrane helix</keyword>
<reference key="1">
    <citation type="journal article" date="2008" name="Appl. Environ. Microbiol.">
        <title>Genome of the epsilonproteobacterial chemolithoautotroph Sulfurimonas denitrificans.</title>
        <authorList>
            <person name="Sievert S.M."/>
            <person name="Scott K.M."/>
            <person name="Klotz M.G."/>
            <person name="Chain P.S.G."/>
            <person name="Hauser L.J."/>
            <person name="Hemp J."/>
            <person name="Huegler M."/>
            <person name="Land M."/>
            <person name="Lapidus A."/>
            <person name="Larimer F.W."/>
            <person name="Lucas S."/>
            <person name="Malfatti S.A."/>
            <person name="Meyer F."/>
            <person name="Paulsen I.T."/>
            <person name="Ren Q."/>
            <person name="Simon J."/>
            <person name="Bailey K."/>
            <person name="Diaz E."/>
            <person name="Fitzpatrick K.A."/>
            <person name="Glover B."/>
            <person name="Gwatney N."/>
            <person name="Korajkic A."/>
            <person name="Long A."/>
            <person name="Mobberley J.M."/>
            <person name="Pantry S.N."/>
            <person name="Pazder G."/>
            <person name="Peterson S."/>
            <person name="Quintanilla J.D."/>
            <person name="Sprinkle R."/>
            <person name="Stephens J."/>
            <person name="Thomas P."/>
            <person name="Vaughn R."/>
            <person name="Weber M.J."/>
            <person name="Wooten L.L."/>
        </authorList>
    </citation>
    <scope>NUCLEOTIDE SEQUENCE [LARGE SCALE GENOMIC DNA]</scope>
    <source>
        <strain>ATCC 33889 / DSM 1251</strain>
    </source>
</reference>
<protein>
    <recommendedName>
        <fullName evidence="1">Phospho-N-acetylmuramoyl-pentapeptide-transferase</fullName>
        <ecNumber evidence="1">2.7.8.13</ecNumber>
    </recommendedName>
    <alternativeName>
        <fullName evidence="1">UDP-MurNAc-pentapeptide phosphotransferase</fullName>
    </alternativeName>
</protein>
<evidence type="ECO:0000255" key="1">
    <source>
        <dbReference type="HAMAP-Rule" id="MF_00038"/>
    </source>
</evidence>
<organism>
    <name type="scientific">Sulfurimonas denitrificans (strain ATCC 33889 / DSM 1251)</name>
    <name type="common">Thiomicrospira denitrificans (strain ATCC 33889 / DSM 1251)</name>
    <dbReference type="NCBI Taxonomy" id="326298"/>
    <lineage>
        <taxon>Bacteria</taxon>
        <taxon>Pseudomonadati</taxon>
        <taxon>Campylobacterota</taxon>
        <taxon>Epsilonproteobacteria</taxon>
        <taxon>Campylobacterales</taxon>
        <taxon>Sulfurimonadaceae</taxon>
        <taxon>Sulfurimonas</taxon>
    </lineage>
</organism>
<feature type="chain" id="PRO_0000235499" description="Phospho-N-acetylmuramoyl-pentapeptide-transferase">
    <location>
        <begin position="1"/>
        <end position="353"/>
    </location>
</feature>
<feature type="transmembrane region" description="Helical" evidence="1">
    <location>
        <begin position="13"/>
        <end position="33"/>
    </location>
</feature>
<feature type="transmembrane region" description="Helical" evidence="1">
    <location>
        <begin position="66"/>
        <end position="86"/>
    </location>
</feature>
<feature type="transmembrane region" description="Helical" evidence="1">
    <location>
        <begin position="88"/>
        <end position="108"/>
    </location>
</feature>
<feature type="transmembrane region" description="Helical" evidence="1">
    <location>
        <begin position="130"/>
        <end position="150"/>
    </location>
</feature>
<feature type="transmembrane region" description="Helical" evidence="1">
    <location>
        <begin position="162"/>
        <end position="182"/>
    </location>
</feature>
<feature type="transmembrane region" description="Helical" evidence="1">
    <location>
        <begin position="193"/>
        <end position="213"/>
    </location>
</feature>
<feature type="transmembrane region" description="Helical" evidence="1">
    <location>
        <begin position="229"/>
        <end position="249"/>
    </location>
</feature>
<feature type="transmembrane region" description="Helical" evidence="1">
    <location>
        <begin position="256"/>
        <end position="276"/>
    </location>
</feature>
<feature type="transmembrane region" description="Helical" evidence="1">
    <location>
        <begin position="281"/>
        <end position="301"/>
    </location>
</feature>
<feature type="transmembrane region" description="Helical" evidence="1">
    <location>
        <begin position="330"/>
        <end position="350"/>
    </location>
</feature>
<name>MRAY_SULDN</name>
<comment type="function">
    <text evidence="1">Catalyzes the initial step of the lipid cycle reactions in the biosynthesis of the cell wall peptidoglycan: transfers peptidoglycan precursor phospho-MurNAc-pentapeptide from UDP-MurNAc-pentapeptide onto the lipid carrier undecaprenyl phosphate, yielding undecaprenyl-pyrophosphoryl-MurNAc-pentapeptide, known as lipid I.</text>
</comment>
<comment type="catalytic activity">
    <reaction evidence="1">
        <text>UDP-N-acetyl-alpha-D-muramoyl-L-alanyl-gamma-D-glutamyl-meso-2,6-diaminopimeloyl-D-alanyl-D-alanine + di-trans,octa-cis-undecaprenyl phosphate = di-trans,octa-cis-undecaprenyl diphospho-N-acetyl-alpha-D-muramoyl-L-alanyl-D-glutamyl-meso-2,6-diaminopimeloyl-D-alanyl-D-alanine + UMP</text>
        <dbReference type="Rhea" id="RHEA:28386"/>
        <dbReference type="ChEBI" id="CHEBI:57865"/>
        <dbReference type="ChEBI" id="CHEBI:60392"/>
        <dbReference type="ChEBI" id="CHEBI:61386"/>
        <dbReference type="ChEBI" id="CHEBI:61387"/>
        <dbReference type="EC" id="2.7.8.13"/>
    </reaction>
</comment>
<comment type="cofactor">
    <cofactor evidence="1">
        <name>Mg(2+)</name>
        <dbReference type="ChEBI" id="CHEBI:18420"/>
    </cofactor>
</comment>
<comment type="pathway">
    <text evidence="1">Cell wall biogenesis; peptidoglycan biosynthesis.</text>
</comment>
<comment type="subcellular location">
    <subcellularLocation>
        <location evidence="1">Cell inner membrane</location>
        <topology evidence="1">Multi-pass membrane protein</topology>
    </subcellularLocation>
</comment>
<comment type="similarity">
    <text evidence="1">Belongs to the glycosyltransferase 4 family. MraY subfamily.</text>
</comment>